<sequence>MNTLFMHCRPGFEGEVCSEISDLAARLNVAGYAKAKPATACAEFVCTEEDGAERLMRGQRFAELIFPRQWARGFFIDLPENDRISVILAHMSEFPVCGSLWLEVVDTNDGKELSNFCKKFEGPLRKALTGAGKLVEDTSKPRLLLTFKSGREVFLGLADAGNSAMWPMGIPRLKFPREAPSRSTLKLEEAWHHFIPRDQWEDRLHSDMTGVDLGAAPGGWTWQLVNRGMLVTAIDNGPMAESLMDTGLVQHLMADGFTFKPKQPVDWMVCDIVEKPARNAAMLEEWIGEGHCREAVVNLKLPMKQRYAEVKRLLERIADGFKARGIKVDIGCKQLYHDREEVTCHLRRLDVKKAKAR</sequence>
<name>RLMM_PSEPF</name>
<comment type="function">
    <text evidence="1">Catalyzes the 2'-O-methylation at nucleotide C2498 in 23S rRNA.</text>
</comment>
<comment type="catalytic activity">
    <reaction evidence="1">
        <text>cytidine(2498) in 23S rRNA + S-adenosyl-L-methionine = 2'-O-methylcytidine(2498) in 23S rRNA + S-adenosyl-L-homocysteine + H(+)</text>
        <dbReference type="Rhea" id="RHEA:42788"/>
        <dbReference type="Rhea" id="RHEA-COMP:10244"/>
        <dbReference type="Rhea" id="RHEA-COMP:10245"/>
        <dbReference type="ChEBI" id="CHEBI:15378"/>
        <dbReference type="ChEBI" id="CHEBI:57856"/>
        <dbReference type="ChEBI" id="CHEBI:59789"/>
        <dbReference type="ChEBI" id="CHEBI:74495"/>
        <dbReference type="ChEBI" id="CHEBI:82748"/>
        <dbReference type="EC" id="2.1.1.186"/>
    </reaction>
</comment>
<comment type="subunit">
    <text evidence="1">Monomer.</text>
</comment>
<comment type="subcellular location">
    <subcellularLocation>
        <location evidence="1">Cytoplasm</location>
    </subcellularLocation>
</comment>
<comment type="similarity">
    <text evidence="1">Belongs to the class I-like SAM-binding methyltransferase superfamily. RNA methyltransferase RlmE family. RlmM subfamily.</text>
</comment>
<comment type="sequence caution" evidence="2">
    <conflict type="erroneous initiation">
        <sequence resource="EMBL-CDS" id="ABA75626"/>
    </conflict>
</comment>
<organism>
    <name type="scientific">Pseudomonas fluorescens (strain Pf0-1)</name>
    <dbReference type="NCBI Taxonomy" id="205922"/>
    <lineage>
        <taxon>Bacteria</taxon>
        <taxon>Pseudomonadati</taxon>
        <taxon>Pseudomonadota</taxon>
        <taxon>Gammaproteobacteria</taxon>
        <taxon>Pseudomonadales</taxon>
        <taxon>Pseudomonadaceae</taxon>
        <taxon>Pseudomonas</taxon>
    </lineage>
</organism>
<feature type="chain" id="PRO_0000314527" description="Ribosomal RNA large subunit methyltransferase M">
    <location>
        <begin position="1"/>
        <end position="357"/>
    </location>
</feature>
<feature type="active site" description="Proton acceptor" evidence="1">
    <location>
        <position position="300"/>
    </location>
</feature>
<feature type="binding site" evidence="1">
    <location>
        <position position="183"/>
    </location>
    <ligand>
        <name>S-adenosyl-L-methionine</name>
        <dbReference type="ChEBI" id="CHEBI:59789"/>
    </ligand>
</feature>
<feature type="binding site" evidence="1">
    <location>
        <begin position="216"/>
        <end position="219"/>
    </location>
    <ligand>
        <name>S-adenosyl-L-methionine</name>
        <dbReference type="ChEBI" id="CHEBI:59789"/>
    </ligand>
</feature>
<feature type="binding site" evidence="1">
    <location>
        <position position="235"/>
    </location>
    <ligand>
        <name>S-adenosyl-L-methionine</name>
        <dbReference type="ChEBI" id="CHEBI:59789"/>
    </ligand>
</feature>
<feature type="binding site" evidence="1">
    <location>
        <position position="255"/>
    </location>
    <ligand>
        <name>S-adenosyl-L-methionine</name>
        <dbReference type="ChEBI" id="CHEBI:59789"/>
    </ligand>
</feature>
<feature type="binding site" evidence="1">
    <location>
        <position position="271"/>
    </location>
    <ligand>
        <name>S-adenosyl-L-methionine</name>
        <dbReference type="ChEBI" id="CHEBI:59789"/>
    </ligand>
</feature>
<evidence type="ECO:0000255" key="1">
    <source>
        <dbReference type="HAMAP-Rule" id="MF_01551"/>
    </source>
</evidence>
<evidence type="ECO:0000305" key="2"/>
<proteinExistence type="inferred from homology"/>
<dbReference type="EC" id="2.1.1.186" evidence="1"/>
<dbReference type="EMBL" id="CP000094">
    <property type="protein sequence ID" value="ABA75626.1"/>
    <property type="status" value="ALT_INIT"/>
    <property type="molecule type" value="Genomic_DNA"/>
</dbReference>
<dbReference type="RefSeq" id="WP_041475377.1">
    <property type="nucleotide sequence ID" value="NC_007492.2"/>
</dbReference>
<dbReference type="SMR" id="Q3K9C8"/>
<dbReference type="KEGG" id="pfo:Pfl01_3889"/>
<dbReference type="eggNOG" id="COG2933">
    <property type="taxonomic scope" value="Bacteria"/>
</dbReference>
<dbReference type="HOGENOM" id="CLU_043780_0_0_6"/>
<dbReference type="Proteomes" id="UP000002704">
    <property type="component" value="Chromosome"/>
</dbReference>
<dbReference type="GO" id="GO:0005737">
    <property type="term" value="C:cytoplasm"/>
    <property type="evidence" value="ECO:0007669"/>
    <property type="project" value="UniProtKB-SubCell"/>
</dbReference>
<dbReference type="GO" id="GO:0008757">
    <property type="term" value="F:S-adenosylmethionine-dependent methyltransferase activity"/>
    <property type="evidence" value="ECO:0007669"/>
    <property type="project" value="UniProtKB-UniRule"/>
</dbReference>
<dbReference type="GO" id="GO:0032259">
    <property type="term" value="P:methylation"/>
    <property type="evidence" value="ECO:0007669"/>
    <property type="project" value="UniProtKB-KW"/>
</dbReference>
<dbReference type="GO" id="GO:0006364">
    <property type="term" value="P:rRNA processing"/>
    <property type="evidence" value="ECO:0007669"/>
    <property type="project" value="UniProtKB-UniRule"/>
</dbReference>
<dbReference type="Gene3D" id="3.30.2300.20">
    <property type="match status" value="1"/>
</dbReference>
<dbReference type="Gene3D" id="3.30.70.2810">
    <property type="match status" value="1"/>
</dbReference>
<dbReference type="Gene3D" id="3.40.50.150">
    <property type="entry name" value="Vaccinia Virus protein VP39"/>
    <property type="match status" value="1"/>
</dbReference>
<dbReference type="HAMAP" id="MF_01551">
    <property type="entry name" value="23SrRNA_methyltr_M"/>
    <property type="match status" value="1"/>
</dbReference>
<dbReference type="InterPro" id="IPR040739">
    <property type="entry name" value="RlmM_FDX"/>
</dbReference>
<dbReference type="InterPro" id="IPR048646">
    <property type="entry name" value="RlmM_THUMP-like"/>
</dbReference>
<dbReference type="InterPro" id="IPR002877">
    <property type="entry name" value="RNA_MeTrfase_FtsJ_dom"/>
</dbReference>
<dbReference type="InterPro" id="IPR011224">
    <property type="entry name" value="rRNA_MeTrfase_M"/>
</dbReference>
<dbReference type="InterPro" id="IPR029063">
    <property type="entry name" value="SAM-dependent_MTases_sf"/>
</dbReference>
<dbReference type="NCBIfam" id="NF008734">
    <property type="entry name" value="PRK11760.1"/>
    <property type="match status" value="1"/>
</dbReference>
<dbReference type="PANTHER" id="PTHR37524">
    <property type="entry name" value="RIBOSOMAL RNA LARGE SUBUNIT METHYLTRANSFERASE M"/>
    <property type="match status" value="1"/>
</dbReference>
<dbReference type="PANTHER" id="PTHR37524:SF2">
    <property type="entry name" value="RIBOSOMAL RNA METHYLTRANSFERASE FTSJ DOMAIN-CONTAINING PROTEIN"/>
    <property type="match status" value="1"/>
</dbReference>
<dbReference type="Pfam" id="PF01728">
    <property type="entry name" value="FtsJ"/>
    <property type="match status" value="1"/>
</dbReference>
<dbReference type="Pfam" id="PF18125">
    <property type="entry name" value="RlmM_FDX"/>
    <property type="match status" value="1"/>
</dbReference>
<dbReference type="Pfam" id="PF21239">
    <property type="entry name" value="RLMM_N"/>
    <property type="match status" value="1"/>
</dbReference>
<dbReference type="PIRSF" id="PIRSF028774">
    <property type="entry name" value="UCP028774"/>
    <property type="match status" value="1"/>
</dbReference>
<dbReference type="SUPFAM" id="SSF53335">
    <property type="entry name" value="S-adenosyl-L-methionine-dependent methyltransferases"/>
    <property type="match status" value="1"/>
</dbReference>
<gene>
    <name evidence="1" type="primary">rlmM</name>
    <name type="ordered locus">Pfl01_3889</name>
</gene>
<accession>Q3K9C8</accession>
<protein>
    <recommendedName>
        <fullName evidence="1">Ribosomal RNA large subunit methyltransferase M</fullName>
        <ecNumber evidence="1">2.1.1.186</ecNumber>
    </recommendedName>
    <alternativeName>
        <fullName evidence="1">23S rRNA (cytidine2498-2'-O)-methyltransferase</fullName>
    </alternativeName>
    <alternativeName>
        <fullName evidence="1">23S rRNA 2'-O-ribose methyltransferase RlmM</fullName>
    </alternativeName>
</protein>
<keyword id="KW-0963">Cytoplasm</keyword>
<keyword id="KW-0489">Methyltransferase</keyword>
<keyword id="KW-0698">rRNA processing</keyword>
<keyword id="KW-0949">S-adenosyl-L-methionine</keyword>
<keyword id="KW-0808">Transferase</keyword>
<reference key="1">
    <citation type="journal article" date="2009" name="Genome Biol.">
        <title>Genomic and genetic analyses of diversity and plant interactions of Pseudomonas fluorescens.</title>
        <authorList>
            <person name="Silby M.W."/>
            <person name="Cerdeno-Tarraga A.M."/>
            <person name="Vernikos G.S."/>
            <person name="Giddens S.R."/>
            <person name="Jackson R.W."/>
            <person name="Preston G.M."/>
            <person name="Zhang X.-X."/>
            <person name="Moon C.D."/>
            <person name="Gehrig S.M."/>
            <person name="Godfrey S.A.C."/>
            <person name="Knight C.G."/>
            <person name="Malone J.G."/>
            <person name="Robinson Z."/>
            <person name="Spiers A.J."/>
            <person name="Harris S."/>
            <person name="Challis G.L."/>
            <person name="Yaxley A.M."/>
            <person name="Harris D."/>
            <person name="Seeger K."/>
            <person name="Murphy L."/>
            <person name="Rutter S."/>
            <person name="Squares R."/>
            <person name="Quail M.A."/>
            <person name="Saunders E."/>
            <person name="Mavromatis K."/>
            <person name="Brettin T.S."/>
            <person name="Bentley S.D."/>
            <person name="Hothersall J."/>
            <person name="Stephens E."/>
            <person name="Thomas C.M."/>
            <person name="Parkhill J."/>
            <person name="Levy S.B."/>
            <person name="Rainey P.B."/>
            <person name="Thomson N.R."/>
        </authorList>
    </citation>
    <scope>NUCLEOTIDE SEQUENCE [LARGE SCALE GENOMIC DNA]</scope>
    <source>
        <strain>Pf0-1</strain>
    </source>
</reference>